<sequence>MQLLLLIPLHYRLKDSKRIYQIILNLGSLLRISSIRQDNMELLELIIDPMIKAEVIERVSEFLTKTLGKIIVKCNDTSGFIANRVGYFLLELVARKAISQNLDVATIDKIFTTFLGLPSTGIFGLYDLIGYDVMKLISSSLLASLPANDAYHKIICKDPCS</sequence>
<protein>
    <recommendedName>
        <fullName>Putative uncharacterized protein RC0841</fullName>
    </recommendedName>
</protein>
<proteinExistence type="uncertain"/>
<gene>
    <name type="ordered locus">RC0841</name>
</gene>
<organism>
    <name type="scientific">Rickettsia conorii (strain ATCC VR-613 / Malish 7)</name>
    <dbReference type="NCBI Taxonomy" id="272944"/>
    <lineage>
        <taxon>Bacteria</taxon>
        <taxon>Pseudomonadati</taxon>
        <taxon>Pseudomonadota</taxon>
        <taxon>Alphaproteobacteria</taxon>
        <taxon>Rickettsiales</taxon>
        <taxon>Rickettsiaceae</taxon>
        <taxon>Rickettsieae</taxon>
        <taxon>Rickettsia</taxon>
        <taxon>spotted fever group</taxon>
    </lineage>
</organism>
<comment type="caution">
    <text evidence="1">Could be the product of a pseudogene. It corresponds to positions 95 to 221 of the complete orthologous and probably active protein in R.felis (RF_0890).</text>
</comment>
<evidence type="ECO:0000305" key="1"/>
<name>Y841_RICCN</name>
<feature type="chain" id="PRO_0000284425" description="Putative uncharacterized protein RC0841">
    <location>
        <begin position="1"/>
        <end position="161"/>
    </location>
</feature>
<reference key="1">
    <citation type="journal article" date="2001" name="Science">
        <title>Mechanisms of evolution in Rickettsia conorii and R. prowazekii.</title>
        <authorList>
            <person name="Ogata H."/>
            <person name="Audic S."/>
            <person name="Renesto-Audiffren P."/>
            <person name="Fournier P.-E."/>
            <person name="Barbe V."/>
            <person name="Samson D."/>
            <person name="Roux V."/>
            <person name="Cossart P."/>
            <person name="Weissenbach J."/>
            <person name="Claverie J.-M."/>
            <person name="Raoult D."/>
        </authorList>
    </citation>
    <scope>NUCLEOTIDE SEQUENCE [LARGE SCALE GENOMIC DNA]</scope>
    <source>
        <strain>ATCC VR-613 / Malish 7</strain>
    </source>
</reference>
<dbReference type="EMBL" id="AE006914">
    <property type="protein sequence ID" value="AAL03379.1"/>
    <property type="molecule type" value="Genomic_DNA"/>
</dbReference>
<dbReference type="PIR" id="A97805">
    <property type="entry name" value="A97805"/>
</dbReference>
<dbReference type="SMR" id="Q92HD0"/>
<dbReference type="KEGG" id="rco:RC0841"/>
<dbReference type="HOGENOM" id="CLU_139171_0_0_5"/>
<dbReference type="Proteomes" id="UP000000816">
    <property type="component" value="Chromosome"/>
</dbReference>
<dbReference type="GO" id="GO:0016616">
    <property type="term" value="F:oxidoreductase activity, acting on the CH-OH group of donors, NAD or NADP as acceptor"/>
    <property type="evidence" value="ECO:0007669"/>
    <property type="project" value="InterPro"/>
</dbReference>
<dbReference type="GO" id="GO:0006631">
    <property type="term" value="P:fatty acid metabolic process"/>
    <property type="evidence" value="ECO:0007669"/>
    <property type="project" value="InterPro"/>
</dbReference>
<dbReference type="Gene3D" id="1.10.1040.50">
    <property type="match status" value="1"/>
</dbReference>
<dbReference type="Gene3D" id="3.40.50.720">
    <property type="entry name" value="NAD(P)-binding Rossmann-like Domain"/>
    <property type="match status" value="1"/>
</dbReference>
<dbReference type="InterPro" id="IPR006108">
    <property type="entry name" value="3HC_DH_C"/>
</dbReference>
<dbReference type="InterPro" id="IPR008927">
    <property type="entry name" value="6-PGluconate_DH-like_C_sf"/>
</dbReference>
<dbReference type="PANTHER" id="PTHR48075">
    <property type="entry name" value="3-HYDROXYACYL-COA DEHYDROGENASE FAMILY PROTEIN"/>
    <property type="match status" value="1"/>
</dbReference>
<dbReference type="PANTHER" id="PTHR48075:SF7">
    <property type="entry name" value="3-HYDROXYACYL-COA DEHYDROGENASE-RELATED"/>
    <property type="match status" value="1"/>
</dbReference>
<dbReference type="Pfam" id="PF00725">
    <property type="entry name" value="3HCDH"/>
    <property type="match status" value="1"/>
</dbReference>
<dbReference type="SUPFAM" id="SSF48179">
    <property type="entry name" value="6-phosphogluconate dehydrogenase C-terminal domain-like"/>
    <property type="match status" value="1"/>
</dbReference>
<accession>Q92HD0</accession>